<dbReference type="EMBL" id="CP000058">
    <property type="protein sequence ID" value="AAZ33303.1"/>
    <property type="molecule type" value="Genomic_DNA"/>
</dbReference>
<dbReference type="RefSeq" id="WP_002555497.1">
    <property type="nucleotide sequence ID" value="NC_005773.3"/>
</dbReference>
<dbReference type="SMR" id="Q48D28"/>
<dbReference type="GeneID" id="96221038"/>
<dbReference type="KEGG" id="psp:PSPPH_4600"/>
<dbReference type="eggNOG" id="COG0222">
    <property type="taxonomic scope" value="Bacteria"/>
</dbReference>
<dbReference type="HOGENOM" id="CLU_086499_3_2_6"/>
<dbReference type="Proteomes" id="UP000000551">
    <property type="component" value="Chromosome"/>
</dbReference>
<dbReference type="GO" id="GO:0022625">
    <property type="term" value="C:cytosolic large ribosomal subunit"/>
    <property type="evidence" value="ECO:0007669"/>
    <property type="project" value="TreeGrafter"/>
</dbReference>
<dbReference type="GO" id="GO:0003729">
    <property type="term" value="F:mRNA binding"/>
    <property type="evidence" value="ECO:0007669"/>
    <property type="project" value="TreeGrafter"/>
</dbReference>
<dbReference type="GO" id="GO:0003735">
    <property type="term" value="F:structural constituent of ribosome"/>
    <property type="evidence" value="ECO:0007669"/>
    <property type="project" value="InterPro"/>
</dbReference>
<dbReference type="GO" id="GO:0006412">
    <property type="term" value="P:translation"/>
    <property type="evidence" value="ECO:0007669"/>
    <property type="project" value="UniProtKB-UniRule"/>
</dbReference>
<dbReference type="CDD" id="cd00387">
    <property type="entry name" value="Ribosomal_L7_L12"/>
    <property type="match status" value="1"/>
</dbReference>
<dbReference type="FunFam" id="3.30.1390.10:FF:000001">
    <property type="entry name" value="50S ribosomal protein L7/L12"/>
    <property type="match status" value="1"/>
</dbReference>
<dbReference type="Gene3D" id="3.30.1390.10">
    <property type="match status" value="1"/>
</dbReference>
<dbReference type="Gene3D" id="1.20.5.710">
    <property type="entry name" value="Single helix bin"/>
    <property type="match status" value="1"/>
</dbReference>
<dbReference type="HAMAP" id="MF_00368">
    <property type="entry name" value="Ribosomal_bL12"/>
    <property type="match status" value="1"/>
</dbReference>
<dbReference type="InterPro" id="IPR000206">
    <property type="entry name" value="Ribosomal_bL12"/>
</dbReference>
<dbReference type="InterPro" id="IPR013823">
    <property type="entry name" value="Ribosomal_bL12_C"/>
</dbReference>
<dbReference type="InterPro" id="IPR014719">
    <property type="entry name" value="Ribosomal_bL12_C/ClpS-like"/>
</dbReference>
<dbReference type="InterPro" id="IPR008932">
    <property type="entry name" value="Ribosomal_bL12_oligo"/>
</dbReference>
<dbReference type="InterPro" id="IPR036235">
    <property type="entry name" value="Ribosomal_bL12_oligo_N_sf"/>
</dbReference>
<dbReference type="NCBIfam" id="TIGR00855">
    <property type="entry name" value="L12"/>
    <property type="match status" value="1"/>
</dbReference>
<dbReference type="PANTHER" id="PTHR45987">
    <property type="entry name" value="39S RIBOSOMAL PROTEIN L12"/>
    <property type="match status" value="1"/>
</dbReference>
<dbReference type="PANTHER" id="PTHR45987:SF4">
    <property type="entry name" value="LARGE RIBOSOMAL SUBUNIT PROTEIN BL12M"/>
    <property type="match status" value="1"/>
</dbReference>
<dbReference type="Pfam" id="PF00542">
    <property type="entry name" value="Ribosomal_L12"/>
    <property type="match status" value="1"/>
</dbReference>
<dbReference type="Pfam" id="PF16320">
    <property type="entry name" value="Ribosomal_L12_N"/>
    <property type="match status" value="1"/>
</dbReference>
<dbReference type="SUPFAM" id="SSF54736">
    <property type="entry name" value="ClpS-like"/>
    <property type="match status" value="1"/>
</dbReference>
<dbReference type="SUPFAM" id="SSF48300">
    <property type="entry name" value="Ribosomal protein L7/12, oligomerisation (N-terminal) domain"/>
    <property type="match status" value="1"/>
</dbReference>
<name>RL7_PSE14</name>
<proteinExistence type="inferred from homology"/>
<organism>
    <name type="scientific">Pseudomonas savastanoi pv. phaseolicola (strain 1448A / Race 6)</name>
    <name type="common">Pseudomonas syringae pv. phaseolicola (strain 1448A / Race 6)</name>
    <dbReference type="NCBI Taxonomy" id="264730"/>
    <lineage>
        <taxon>Bacteria</taxon>
        <taxon>Pseudomonadati</taxon>
        <taxon>Pseudomonadota</taxon>
        <taxon>Gammaproteobacteria</taxon>
        <taxon>Pseudomonadales</taxon>
        <taxon>Pseudomonadaceae</taxon>
        <taxon>Pseudomonas</taxon>
    </lineage>
</organism>
<accession>Q48D28</accession>
<evidence type="ECO:0000255" key="1">
    <source>
        <dbReference type="HAMAP-Rule" id="MF_00368"/>
    </source>
</evidence>
<evidence type="ECO:0000305" key="2"/>
<keyword id="KW-0687">Ribonucleoprotein</keyword>
<keyword id="KW-0689">Ribosomal protein</keyword>
<protein>
    <recommendedName>
        <fullName evidence="1">Large ribosomal subunit protein bL12</fullName>
    </recommendedName>
    <alternativeName>
        <fullName evidence="2">50S ribosomal protein L7/L12</fullName>
    </alternativeName>
</protein>
<sequence>MSISQDDILNAVAEMSVLQVVELIKAFEEKFGVTAAAGSAGPAVAAAVVEEQTEFNVMLLEAGEKKVNVIKAVRELTGLGLKEAKAVVDGAPAMVLEAVAKDAADKAKATLEEAGAKVELK</sequence>
<gene>
    <name evidence="1" type="primary">rplL</name>
    <name type="ordered locus">PSPPH_4600</name>
</gene>
<comment type="function">
    <text evidence="1">Forms part of the ribosomal stalk which helps the ribosome interact with GTP-bound translation factors. Is thus essential for accurate translation.</text>
</comment>
<comment type="subunit">
    <text evidence="1">Homodimer. Part of the ribosomal stalk of the 50S ribosomal subunit. Forms a multimeric L10(L12)X complex, where L10 forms an elongated spine to which 2 to 4 L12 dimers bind in a sequential fashion. Binds GTP-bound translation factors.</text>
</comment>
<comment type="similarity">
    <text evidence="1">Belongs to the bacterial ribosomal protein bL12 family.</text>
</comment>
<reference key="1">
    <citation type="journal article" date="2005" name="J. Bacteriol.">
        <title>Whole-genome sequence analysis of Pseudomonas syringae pv. phaseolicola 1448A reveals divergence among pathovars in genes involved in virulence and transposition.</title>
        <authorList>
            <person name="Joardar V."/>
            <person name="Lindeberg M."/>
            <person name="Jackson R.W."/>
            <person name="Selengut J."/>
            <person name="Dodson R."/>
            <person name="Brinkac L.M."/>
            <person name="Daugherty S.C."/>
            <person name="DeBoy R.T."/>
            <person name="Durkin A.S."/>
            <person name="Gwinn Giglio M."/>
            <person name="Madupu R."/>
            <person name="Nelson W.C."/>
            <person name="Rosovitz M.J."/>
            <person name="Sullivan S.A."/>
            <person name="Crabtree J."/>
            <person name="Creasy T."/>
            <person name="Davidsen T.M."/>
            <person name="Haft D.H."/>
            <person name="Zafar N."/>
            <person name="Zhou L."/>
            <person name="Halpin R."/>
            <person name="Holley T."/>
            <person name="Khouri H.M."/>
            <person name="Feldblyum T.V."/>
            <person name="White O."/>
            <person name="Fraser C.M."/>
            <person name="Chatterjee A.K."/>
            <person name="Cartinhour S."/>
            <person name="Schneider D."/>
            <person name="Mansfield J.W."/>
            <person name="Collmer A."/>
            <person name="Buell R."/>
        </authorList>
    </citation>
    <scope>NUCLEOTIDE SEQUENCE [LARGE SCALE GENOMIC DNA]</scope>
    <source>
        <strain>1448A / Race 6</strain>
    </source>
</reference>
<feature type="chain" id="PRO_0000243474" description="Large ribosomal subunit protein bL12">
    <location>
        <begin position="1"/>
        <end position="121"/>
    </location>
</feature>